<name>SYR_RIPO1</name>
<feature type="chain" id="PRO_1000198893" description="Arginine--tRNA ligase">
    <location>
        <begin position="1"/>
        <end position="585"/>
    </location>
</feature>
<feature type="short sequence motif" description="'HIGH' region">
    <location>
        <begin position="126"/>
        <end position="136"/>
    </location>
</feature>
<accession>B7JVP5</accession>
<organism>
    <name type="scientific">Rippkaea orientalis (strain PCC 8801 / RF-1)</name>
    <name type="common">Cyanothece sp. (strain PCC 8801)</name>
    <dbReference type="NCBI Taxonomy" id="41431"/>
    <lineage>
        <taxon>Bacteria</taxon>
        <taxon>Bacillati</taxon>
        <taxon>Cyanobacteriota</taxon>
        <taxon>Cyanophyceae</taxon>
        <taxon>Oscillatoriophycideae</taxon>
        <taxon>Chroococcales</taxon>
        <taxon>Aphanothecaceae</taxon>
        <taxon>Rippkaea</taxon>
        <taxon>Rippkaea orientalis</taxon>
    </lineage>
</organism>
<gene>
    <name evidence="1" type="primary">argS</name>
    <name type="ordered locus">PCC8801_0525</name>
</gene>
<protein>
    <recommendedName>
        <fullName evidence="1">Arginine--tRNA ligase</fullName>
        <ecNumber evidence="1">6.1.1.19</ecNumber>
    </recommendedName>
    <alternativeName>
        <fullName evidence="1">Arginyl-tRNA synthetase</fullName>
        <shortName evidence="1">ArgRS</shortName>
    </alternativeName>
</protein>
<comment type="catalytic activity">
    <reaction evidence="1">
        <text>tRNA(Arg) + L-arginine + ATP = L-arginyl-tRNA(Arg) + AMP + diphosphate</text>
        <dbReference type="Rhea" id="RHEA:20301"/>
        <dbReference type="Rhea" id="RHEA-COMP:9658"/>
        <dbReference type="Rhea" id="RHEA-COMP:9673"/>
        <dbReference type="ChEBI" id="CHEBI:30616"/>
        <dbReference type="ChEBI" id="CHEBI:32682"/>
        <dbReference type="ChEBI" id="CHEBI:33019"/>
        <dbReference type="ChEBI" id="CHEBI:78442"/>
        <dbReference type="ChEBI" id="CHEBI:78513"/>
        <dbReference type="ChEBI" id="CHEBI:456215"/>
        <dbReference type="EC" id="6.1.1.19"/>
    </reaction>
</comment>
<comment type="subunit">
    <text evidence="1">Monomer.</text>
</comment>
<comment type="subcellular location">
    <subcellularLocation>
        <location evidence="1">Cytoplasm</location>
    </subcellularLocation>
</comment>
<comment type="similarity">
    <text evidence="1">Belongs to the class-I aminoacyl-tRNA synthetase family.</text>
</comment>
<evidence type="ECO:0000255" key="1">
    <source>
        <dbReference type="HAMAP-Rule" id="MF_00123"/>
    </source>
</evidence>
<proteinExistence type="inferred from homology"/>
<sequence length="585" mass="65836">MTSINEQLTNYFIQALVKAFGAEFSDIDPIVVPASNPKFGDYQANIALSLAKKLGEQPRAIAQKIIDNLSLEDLGELPTIAGPGFINIKIKPTYLATQLKVQQNSSSLGVTKADPIEKIIVDFSSPNIAKEMHVGHLRSTIIGDCIARILEVRGHQVLRLNHVGDWGTQFGMLIAYLAEVYPDALTTADALDIGDLVTFYKQAKKRFDEDEKFQETARNQVVKLQAGDSQTRHAWQLLCEQSRREFQVIYDILDINITERGESFYNPLLEDIIKELDHQGLLKKDAGAQCVFLDGFTNKSGDPLPLIVQKSDGGYNYATTDLAALKYRITQDQAERIIYVTDAGQANHFAQVFQVAKKAHIIPKNVEIIHVPFGLVKGEDGKKLKTRSGTTIKLRDLLDEAVIYARQDLEKRLAEEGRQESEDFIANVSQVVGISAVKYADLSQNRTSDYIFSYDKMLALQGNTAPYMLYAYARIQSISREGNIDFESLQQEAKIILQEETEIELGKYLLQLSEVIEEVEKTLLPNRLCDYLYELSKKFNRFYENCPVLKSEEPLRTSRLLLCDLTARTLKLGLSLLGIPVLERM</sequence>
<dbReference type="EC" id="6.1.1.19" evidence="1"/>
<dbReference type="EMBL" id="CP001287">
    <property type="protein sequence ID" value="ACK64616.1"/>
    <property type="molecule type" value="Genomic_DNA"/>
</dbReference>
<dbReference type="RefSeq" id="WP_012593893.1">
    <property type="nucleotide sequence ID" value="NC_011726.1"/>
</dbReference>
<dbReference type="SMR" id="B7JVP5"/>
<dbReference type="STRING" id="41431.PCC8801_0525"/>
<dbReference type="KEGG" id="cyp:PCC8801_0525"/>
<dbReference type="eggNOG" id="COG0018">
    <property type="taxonomic scope" value="Bacteria"/>
</dbReference>
<dbReference type="HOGENOM" id="CLU_006406_5_1_3"/>
<dbReference type="OrthoDB" id="9805987at2"/>
<dbReference type="Proteomes" id="UP000008204">
    <property type="component" value="Chromosome"/>
</dbReference>
<dbReference type="GO" id="GO:0005737">
    <property type="term" value="C:cytoplasm"/>
    <property type="evidence" value="ECO:0007669"/>
    <property type="project" value="UniProtKB-SubCell"/>
</dbReference>
<dbReference type="GO" id="GO:0004814">
    <property type="term" value="F:arginine-tRNA ligase activity"/>
    <property type="evidence" value="ECO:0007669"/>
    <property type="project" value="UniProtKB-UniRule"/>
</dbReference>
<dbReference type="GO" id="GO:0005524">
    <property type="term" value="F:ATP binding"/>
    <property type="evidence" value="ECO:0007669"/>
    <property type="project" value="UniProtKB-UniRule"/>
</dbReference>
<dbReference type="GO" id="GO:0006420">
    <property type="term" value="P:arginyl-tRNA aminoacylation"/>
    <property type="evidence" value="ECO:0007669"/>
    <property type="project" value="UniProtKB-UniRule"/>
</dbReference>
<dbReference type="CDD" id="cd07956">
    <property type="entry name" value="Anticodon_Ia_Arg"/>
    <property type="match status" value="1"/>
</dbReference>
<dbReference type="CDD" id="cd00671">
    <property type="entry name" value="ArgRS_core"/>
    <property type="match status" value="1"/>
</dbReference>
<dbReference type="FunFam" id="1.10.730.10:FF:000008">
    <property type="entry name" value="Arginine--tRNA ligase"/>
    <property type="match status" value="1"/>
</dbReference>
<dbReference type="FunFam" id="3.40.50.620:FF:000030">
    <property type="entry name" value="Arginine--tRNA ligase"/>
    <property type="match status" value="1"/>
</dbReference>
<dbReference type="Gene3D" id="3.30.1360.70">
    <property type="entry name" value="Arginyl tRNA synthetase N-terminal domain"/>
    <property type="match status" value="1"/>
</dbReference>
<dbReference type="Gene3D" id="3.40.50.620">
    <property type="entry name" value="HUPs"/>
    <property type="match status" value="1"/>
</dbReference>
<dbReference type="Gene3D" id="1.10.730.10">
    <property type="entry name" value="Isoleucyl-tRNA Synthetase, Domain 1"/>
    <property type="match status" value="1"/>
</dbReference>
<dbReference type="HAMAP" id="MF_00123">
    <property type="entry name" value="Arg_tRNA_synth"/>
    <property type="match status" value="1"/>
</dbReference>
<dbReference type="InterPro" id="IPR001412">
    <property type="entry name" value="aa-tRNA-synth_I_CS"/>
</dbReference>
<dbReference type="InterPro" id="IPR001278">
    <property type="entry name" value="Arg-tRNA-ligase"/>
</dbReference>
<dbReference type="InterPro" id="IPR005148">
    <property type="entry name" value="Arg-tRNA-synth_N"/>
</dbReference>
<dbReference type="InterPro" id="IPR036695">
    <property type="entry name" value="Arg-tRNA-synth_N_sf"/>
</dbReference>
<dbReference type="InterPro" id="IPR035684">
    <property type="entry name" value="ArgRS_core"/>
</dbReference>
<dbReference type="InterPro" id="IPR008909">
    <property type="entry name" value="DALR_anticod-bd"/>
</dbReference>
<dbReference type="InterPro" id="IPR014729">
    <property type="entry name" value="Rossmann-like_a/b/a_fold"/>
</dbReference>
<dbReference type="InterPro" id="IPR009080">
    <property type="entry name" value="tRNAsynth_Ia_anticodon-bd"/>
</dbReference>
<dbReference type="NCBIfam" id="TIGR00456">
    <property type="entry name" value="argS"/>
    <property type="match status" value="1"/>
</dbReference>
<dbReference type="PANTHER" id="PTHR11956:SF5">
    <property type="entry name" value="ARGININE--TRNA LIGASE, CYTOPLASMIC"/>
    <property type="match status" value="1"/>
</dbReference>
<dbReference type="PANTHER" id="PTHR11956">
    <property type="entry name" value="ARGINYL-TRNA SYNTHETASE"/>
    <property type="match status" value="1"/>
</dbReference>
<dbReference type="Pfam" id="PF03485">
    <property type="entry name" value="Arg_tRNA_synt_N"/>
    <property type="match status" value="1"/>
</dbReference>
<dbReference type="Pfam" id="PF05746">
    <property type="entry name" value="DALR_1"/>
    <property type="match status" value="1"/>
</dbReference>
<dbReference type="Pfam" id="PF00750">
    <property type="entry name" value="tRNA-synt_1d"/>
    <property type="match status" value="1"/>
</dbReference>
<dbReference type="PRINTS" id="PR01038">
    <property type="entry name" value="TRNASYNTHARG"/>
</dbReference>
<dbReference type="SMART" id="SM01016">
    <property type="entry name" value="Arg_tRNA_synt_N"/>
    <property type="match status" value="1"/>
</dbReference>
<dbReference type="SMART" id="SM00836">
    <property type="entry name" value="DALR_1"/>
    <property type="match status" value="1"/>
</dbReference>
<dbReference type="SUPFAM" id="SSF47323">
    <property type="entry name" value="Anticodon-binding domain of a subclass of class I aminoacyl-tRNA synthetases"/>
    <property type="match status" value="1"/>
</dbReference>
<dbReference type="SUPFAM" id="SSF55190">
    <property type="entry name" value="Arginyl-tRNA synthetase (ArgRS), N-terminal 'additional' domain"/>
    <property type="match status" value="1"/>
</dbReference>
<dbReference type="SUPFAM" id="SSF52374">
    <property type="entry name" value="Nucleotidylyl transferase"/>
    <property type="match status" value="1"/>
</dbReference>
<dbReference type="PROSITE" id="PS00178">
    <property type="entry name" value="AA_TRNA_LIGASE_I"/>
    <property type="match status" value="1"/>
</dbReference>
<keyword id="KW-0030">Aminoacyl-tRNA synthetase</keyword>
<keyword id="KW-0067">ATP-binding</keyword>
<keyword id="KW-0963">Cytoplasm</keyword>
<keyword id="KW-0436">Ligase</keyword>
<keyword id="KW-0547">Nucleotide-binding</keyword>
<keyword id="KW-0648">Protein biosynthesis</keyword>
<keyword id="KW-1185">Reference proteome</keyword>
<reference key="1">
    <citation type="journal article" date="2011" name="MBio">
        <title>Novel metabolic attributes of the genus Cyanothece, comprising a group of unicellular nitrogen-fixing Cyanobacteria.</title>
        <authorList>
            <person name="Bandyopadhyay A."/>
            <person name="Elvitigala T."/>
            <person name="Welsh E."/>
            <person name="Stockel J."/>
            <person name="Liberton M."/>
            <person name="Min H."/>
            <person name="Sherman L.A."/>
            <person name="Pakrasi H.B."/>
        </authorList>
    </citation>
    <scope>NUCLEOTIDE SEQUENCE [LARGE SCALE GENOMIC DNA]</scope>
    <source>
        <strain>PCC 8801 / RF-1</strain>
    </source>
</reference>